<accession>Q9P126</accession>
<accession>Q6UWX7</accession>
<accession>Q8NHR6</accession>
<keyword id="KW-0002">3D-structure</keyword>
<keyword id="KW-0025">Alternative splicing</keyword>
<keyword id="KW-1015">Disulfide bond</keyword>
<keyword id="KW-0325">Glycoprotein</keyword>
<keyword id="KW-0945">Host-virus interaction</keyword>
<keyword id="KW-0430">Lectin</keyword>
<keyword id="KW-0472">Membrane</keyword>
<keyword id="KW-0597">Phosphoprotein</keyword>
<keyword id="KW-1267">Proteomics identification</keyword>
<keyword id="KW-0675">Receptor</keyword>
<keyword id="KW-1185">Reference proteome</keyword>
<keyword id="KW-0735">Signal-anchor</keyword>
<keyword id="KW-0812">Transmembrane</keyword>
<keyword id="KW-1133">Transmembrane helix</keyword>
<organism>
    <name type="scientific">Homo sapiens</name>
    <name type="common">Human</name>
    <dbReference type="NCBI Taxonomy" id="9606"/>
    <lineage>
        <taxon>Eukaryota</taxon>
        <taxon>Metazoa</taxon>
        <taxon>Chordata</taxon>
        <taxon>Craniata</taxon>
        <taxon>Vertebrata</taxon>
        <taxon>Euteleostomi</taxon>
        <taxon>Mammalia</taxon>
        <taxon>Eutheria</taxon>
        <taxon>Euarchontoglires</taxon>
        <taxon>Primates</taxon>
        <taxon>Haplorrhini</taxon>
        <taxon>Catarrhini</taxon>
        <taxon>Hominidae</taxon>
        <taxon>Homo</taxon>
    </lineage>
</organism>
<gene>
    <name type="primary">CLEC1B</name>
    <name type="synonym">CLEC2</name>
    <name type="ORF">UNQ721/PRO1384</name>
</gene>
<reference key="1">
    <citation type="journal article" date="2000" name="Eur. J. Immunol.">
        <title>Molecular characterization of two novel C-type lectin-like receptors, one of which is selectively expressed in human dendritic cells.</title>
        <authorList>
            <person name="Colonna M."/>
            <person name="Samaridis J."/>
            <person name="Angman L."/>
        </authorList>
    </citation>
    <scope>NUCLEOTIDE SEQUENCE [MRNA] (ISOFORM 1)</scope>
    <scope>TISSUE SPECIFICITY</scope>
    <scope>VARIANTS VAL-20 AND ASP-64</scope>
    <scope>FUNCTION (MICROBIAL INFECTION)</scope>
    <source>
        <tissue>Liver</tissue>
    </source>
</reference>
<reference key="2">
    <citation type="journal article" date="2006" name="J. Virol.">
        <title>DC-SIGN and CLEC-2 mediate human immunodeficiency virus type 1 capture by platelets.</title>
        <authorList>
            <person name="Chaipan C."/>
            <person name="Soilleux E.J."/>
            <person name="Simpson P."/>
            <person name="Hofmann H."/>
            <person name="Gramberg T."/>
            <person name="Marzi A."/>
            <person name="Geier M."/>
            <person name="Stewart E.A."/>
            <person name="Eisemann J."/>
            <person name="Steinkasserer A."/>
            <person name="Suzuki-Inoue K."/>
            <person name="Fuller G.L."/>
            <person name="Pearce A.C."/>
            <person name="Watson S.P."/>
            <person name="Hoxie J.A."/>
            <person name="Baribaud F."/>
            <person name="Poehlmann S."/>
        </authorList>
    </citation>
    <scope>NUCLEOTIDE SEQUENCE [MRNA] (ISOFORM 1)</scope>
    <scope>TISSUE SPECIFICITY</scope>
    <scope>VARIANTS VAL-20 AND ASP-64</scope>
    <source>
        <tissue>Liver</tissue>
    </source>
</reference>
<reference key="3">
    <citation type="journal article" date="2003" name="Genome Res.">
        <title>The secreted protein discovery initiative (SPDI), a large-scale effort to identify novel human secreted and transmembrane proteins: a bioinformatics assessment.</title>
        <authorList>
            <person name="Clark H.F."/>
            <person name="Gurney A.L."/>
            <person name="Abaya E."/>
            <person name="Baker K."/>
            <person name="Baldwin D.T."/>
            <person name="Brush J."/>
            <person name="Chen J."/>
            <person name="Chow B."/>
            <person name="Chui C."/>
            <person name="Crowley C."/>
            <person name="Currell B."/>
            <person name="Deuel B."/>
            <person name="Dowd P."/>
            <person name="Eaton D."/>
            <person name="Foster J.S."/>
            <person name="Grimaldi C."/>
            <person name="Gu Q."/>
            <person name="Hass P.E."/>
            <person name="Heldens S."/>
            <person name="Huang A."/>
            <person name="Kim H.S."/>
            <person name="Klimowski L."/>
            <person name="Jin Y."/>
            <person name="Johnson S."/>
            <person name="Lee J."/>
            <person name="Lewis L."/>
            <person name="Liao D."/>
            <person name="Mark M.R."/>
            <person name="Robbie E."/>
            <person name="Sanchez C."/>
            <person name="Schoenfeld J."/>
            <person name="Seshagiri S."/>
            <person name="Simmons L."/>
            <person name="Singh J."/>
            <person name="Smith V."/>
            <person name="Stinson J."/>
            <person name="Vagts A."/>
            <person name="Vandlen R.L."/>
            <person name="Watanabe C."/>
            <person name="Wieand D."/>
            <person name="Woods K."/>
            <person name="Xie M.-H."/>
            <person name="Yansura D.G."/>
            <person name="Yi S."/>
            <person name="Yu G."/>
            <person name="Yuan J."/>
            <person name="Zhang M."/>
            <person name="Zhang Z."/>
            <person name="Goddard A.D."/>
            <person name="Wood W.I."/>
            <person name="Godowski P.J."/>
            <person name="Gray A.M."/>
        </authorList>
    </citation>
    <scope>NUCLEOTIDE SEQUENCE [LARGE SCALE MRNA] (ISOFORM 1)</scope>
    <scope>VARIANTS VAL-20; PRO-24 AND ASP-64</scope>
</reference>
<reference key="4">
    <citation type="journal article" date="2006" name="Nature">
        <title>The finished DNA sequence of human chromosome 12.</title>
        <authorList>
            <person name="Scherer S.E."/>
            <person name="Muzny D.M."/>
            <person name="Buhay C.J."/>
            <person name="Chen R."/>
            <person name="Cree A."/>
            <person name="Ding Y."/>
            <person name="Dugan-Rocha S."/>
            <person name="Gill R."/>
            <person name="Gunaratne P."/>
            <person name="Harris R.A."/>
            <person name="Hawes A.C."/>
            <person name="Hernandez J."/>
            <person name="Hodgson A.V."/>
            <person name="Hume J."/>
            <person name="Jackson A."/>
            <person name="Khan Z.M."/>
            <person name="Kovar-Smith C."/>
            <person name="Lewis L.R."/>
            <person name="Lozado R.J."/>
            <person name="Metzker M.L."/>
            <person name="Milosavljevic A."/>
            <person name="Miner G.R."/>
            <person name="Montgomery K.T."/>
            <person name="Morgan M.B."/>
            <person name="Nazareth L.V."/>
            <person name="Scott G."/>
            <person name="Sodergren E."/>
            <person name="Song X.-Z."/>
            <person name="Steffen D."/>
            <person name="Lovering R.C."/>
            <person name="Wheeler D.A."/>
            <person name="Worley K.C."/>
            <person name="Yuan Y."/>
            <person name="Zhang Z."/>
            <person name="Adams C.Q."/>
            <person name="Ansari-Lari M.A."/>
            <person name="Ayele M."/>
            <person name="Brown M.J."/>
            <person name="Chen G."/>
            <person name="Chen Z."/>
            <person name="Clerc-Blankenburg K.P."/>
            <person name="Davis C."/>
            <person name="Delgado O."/>
            <person name="Dinh H.H."/>
            <person name="Draper H."/>
            <person name="Gonzalez-Garay M.L."/>
            <person name="Havlak P."/>
            <person name="Jackson L.R."/>
            <person name="Jacob L.S."/>
            <person name="Kelly S.H."/>
            <person name="Li L."/>
            <person name="Li Z."/>
            <person name="Liu J."/>
            <person name="Liu W."/>
            <person name="Lu J."/>
            <person name="Maheshwari M."/>
            <person name="Nguyen B.-V."/>
            <person name="Okwuonu G.O."/>
            <person name="Pasternak S."/>
            <person name="Perez L.M."/>
            <person name="Plopper F.J.H."/>
            <person name="Santibanez J."/>
            <person name="Shen H."/>
            <person name="Tabor P.E."/>
            <person name="Verduzco D."/>
            <person name="Waldron L."/>
            <person name="Wang Q."/>
            <person name="Williams G.A."/>
            <person name="Zhang J."/>
            <person name="Zhou J."/>
            <person name="Allen C.C."/>
            <person name="Amin A.G."/>
            <person name="Anyalebechi V."/>
            <person name="Bailey M."/>
            <person name="Barbaria J.A."/>
            <person name="Bimage K.E."/>
            <person name="Bryant N.P."/>
            <person name="Burch P.E."/>
            <person name="Burkett C.E."/>
            <person name="Burrell K.L."/>
            <person name="Calderon E."/>
            <person name="Cardenas V."/>
            <person name="Carter K."/>
            <person name="Casias K."/>
            <person name="Cavazos I."/>
            <person name="Cavazos S.R."/>
            <person name="Ceasar H."/>
            <person name="Chacko J."/>
            <person name="Chan S.N."/>
            <person name="Chavez D."/>
            <person name="Christopoulos C."/>
            <person name="Chu J."/>
            <person name="Cockrell R."/>
            <person name="Cox C.D."/>
            <person name="Dang M."/>
            <person name="Dathorne S.R."/>
            <person name="David R."/>
            <person name="Davis C.M."/>
            <person name="Davy-Carroll L."/>
            <person name="Deshazo D.R."/>
            <person name="Donlin J.E."/>
            <person name="D'Souza L."/>
            <person name="Eaves K.A."/>
            <person name="Egan A."/>
            <person name="Emery-Cohen A.J."/>
            <person name="Escotto M."/>
            <person name="Flagg N."/>
            <person name="Forbes L.D."/>
            <person name="Gabisi A.M."/>
            <person name="Garza M."/>
            <person name="Hamilton C."/>
            <person name="Henderson N."/>
            <person name="Hernandez O."/>
            <person name="Hines S."/>
            <person name="Hogues M.E."/>
            <person name="Huang M."/>
            <person name="Idlebird D.G."/>
            <person name="Johnson R."/>
            <person name="Jolivet A."/>
            <person name="Jones S."/>
            <person name="Kagan R."/>
            <person name="King L.M."/>
            <person name="Leal B."/>
            <person name="Lebow H."/>
            <person name="Lee S."/>
            <person name="LeVan J.M."/>
            <person name="Lewis L.C."/>
            <person name="London P."/>
            <person name="Lorensuhewa L.M."/>
            <person name="Loulseged H."/>
            <person name="Lovett D.A."/>
            <person name="Lucier A."/>
            <person name="Lucier R.L."/>
            <person name="Ma J."/>
            <person name="Madu R.C."/>
            <person name="Mapua P."/>
            <person name="Martindale A.D."/>
            <person name="Martinez E."/>
            <person name="Massey E."/>
            <person name="Mawhiney S."/>
            <person name="Meador M.G."/>
            <person name="Mendez S."/>
            <person name="Mercado C."/>
            <person name="Mercado I.C."/>
            <person name="Merritt C.E."/>
            <person name="Miner Z.L."/>
            <person name="Minja E."/>
            <person name="Mitchell T."/>
            <person name="Mohabbat F."/>
            <person name="Mohabbat K."/>
            <person name="Montgomery B."/>
            <person name="Moore N."/>
            <person name="Morris S."/>
            <person name="Munidasa M."/>
            <person name="Ngo R.N."/>
            <person name="Nguyen N.B."/>
            <person name="Nickerson E."/>
            <person name="Nwaokelemeh O.O."/>
            <person name="Nwokenkwo S."/>
            <person name="Obregon M."/>
            <person name="Oguh M."/>
            <person name="Oragunye N."/>
            <person name="Oviedo R.J."/>
            <person name="Parish B.J."/>
            <person name="Parker D.N."/>
            <person name="Parrish J."/>
            <person name="Parks K.L."/>
            <person name="Paul H.A."/>
            <person name="Payton B.A."/>
            <person name="Perez A."/>
            <person name="Perrin W."/>
            <person name="Pickens A."/>
            <person name="Primus E.L."/>
            <person name="Pu L.-L."/>
            <person name="Puazo M."/>
            <person name="Quiles M.M."/>
            <person name="Quiroz J.B."/>
            <person name="Rabata D."/>
            <person name="Reeves K."/>
            <person name="Ruiz S.J."/>
            <person name="Shao H."/>
            <person name="Sisson I."/>
            <person name="Sonaike T."/>
            <person name="Sorelle R.P."/>
            <person name="Sutton A.E."/>
            <person name="Svatek A.F."/>
            <person name="Svetz L.A."/>
            <person name="Tamerisa K.S."/>
            <person name="Taylor T.R."/>
            <person name="Teague B."/>
            <person name="Thomas N."/>
            <person name="Thorn R.D."/>
            <person name="Trejos Z.Y."/>
            <person name="Trevino B.K."/>
            <person name="Ukegbu O.N."/>
            <person name="Urban J.B."/>
            <person name="Vasquez L.I."/>
            <person name="Vera V.A."/>
            <person name="Villasana D.M."/>
            <person name="Wang L."/>
            <person name="Ward-Moore S."/>
            <person name="Warren J.T."/>
            <person name="Wei X."/>
            <person name="White F."/>
            <person name="Williamson A.L."/>
            <person name="Wleczyk R."/>
            <person name="Wooden H.S."/>
            <person name="Wooden S.H."/>
            <person name="Yen J."/>
            <person name="Yoon L."/>
            <person name="Yoon V."/>
            <person name="Zorrilla S.E."/>
            <person name="Nelson D."/>
            <person name="Kucherlapati R."/>
            <person name="Weinstock G."/>
            <person name="Gibbs R.A."/>
        </authorList>
    </citation>
    <scope>NUCLEOTIDE SEQUENCE [LARGE SCALE GENOMIC DNA]</scope>
</reference>
<reference key="5">
    <citation type="journal article" date="2004" name="Genome Res.">
        <title>The status, quality, and expansion of the NIH full-length cDNA project: the Mammalian Gene Collection (MGC).</title>
        <authorList>
            <consortium name="The MGC Project Team"/>
        </authorList>
    </citation>
    <scope>NUCLEOTIDE SEQUENCE [LARGE SCALE MRNA] (ISOFORM 2)</scope>
    <scope>VARIANTS VAL-20 AND ASP-64</scope>
    <source>
        <tissue>Testis</tissue>
    </source>
</reference>
<reference key="6">
    <citation type="journal article" date="2006" name="Blood">
        <title>A novel Syk-dependent mechanism of platelet activation by the C-type lectin receptor CLEC-2.</title>
        <authorList>
            <person name="Suzuki-Inoue K."/>
            <person name="Fuller G.L.J."/>
            <person name="Garcia A."/>
            <person name="Eble J.A."/>
            <person name="Poehlmann S."/>
            <person name="Inoue O."/>
            <person name="Gartner T.K."/>
            <person name="Hughan S.C."/>
            <person name="Pearce A.C."/>
            <person name="Laing G.D."/>
            <person name="Theakston R.D.G."/>
            <person name="Schweighoffer E."/>
            <person name="Zitzmann N."/>
            <person name="Morita T."/>
            <person name="Tybulewicz V.L.J."/>
            <person name="Ozaki Y."/>
            <person name="Watson S.P."/>
        </authorList>
    </citation>
    <scope>GLYCOSYLATION</scope>
    <scope>PHOSPHORYLATION</scope>
    <scope>TISSUE SPECIFICITY</scope>
    <scope>FUNCTION (MICROBIAL INFECTION)</scope>
</reference>
<reference key="7">
    <citation type="journal article" date="2008" name="Biochem. J.">
        <title>Renal cells activate the platelet receptor CLEC-2 through podoplanin.</title>
        <authorList>
            <person name="Christou C.M."/>
            <person name="Pearce A.C."/>
            <person name="Watson A.A."/>
            <person name="Mistry A.R."/>
            <person name="Pollitt A.Y."/>
            <person name="Fenton-May A.E."/>
            <person name="Johnson L.A."/>
            <person name="Jackson D.G."/>
            <person name="Watson S.P."/>
            <person name="O'Callaghan C.A."/>
        </authorList>
    </citation>
    <scope>FUNCTION</scope>
    <scope>INTERACTION WITH PDPN</scope>
    <scope>GLYCOSYLATION</scope>
</reference>
<reference key="8">
    <citation type="journal article" date="2008" name="J. Biol. Chem.">
        <title>G6b-B inhibits constitutive and agonist-induced signaling by glycoprotein VI and CLEC-2.</title>
        <authorList>
            <person name="Mori J."/>
            <person name="Pearce A.C."/>
            <person name="Spalton J.C."/>
            <person name="Grygielska B."/>
            <person name="Eble J.A."/>
            <person name="Tomlinson M.G."/>
            <person name="Senis Y.A."/>
            <person name="Watson S.P."/>
        </authorList>
    </citation>
    <scope>FUNCTION</scope>
    <scope>FUNCTION (MICROBIAL INFECTION)</scope>
    <scope>MUTAGENESIS OF TYR-7</scope>
</reference>
<reference key="9">
    <citation type="journal article" date="2009" name="Biochem. Biophys. Res. Commun.">
        <title>RACK1 associates with CLEC-2 and promotes its ubiquitin-proteasome degradation.</title>
        <authorList>
            <person name="Ruan Y."/>
            <person name="Guo L."/>
            <person name="Qiao Y."/>
            <person name="Hong Y."/>
            <person name="Zhou L."/>
            <person name="Sun L."/>
            <person name="Wang L."/>
            <person name="Zhu H."/>
            <person name="Wang L."/>
            <person name="Yun X."/>
            <person name="Xie J."/>
            <person name="Gu J."/>
        </authorList>
    </citation>
    <scope>INTERACTION WITH RACK1</scope>
</reference>
<reference key="10">
    <citation type="journal article" date="2009" name="Biochemistry">
        <title>The platelet receptor CLEC-2 is active as a dimer.</title>
        <authorList>
            <person name="Watson A.A."/>
            <person name="Christou C.M."/>
            <person name="James J.R."/>
            <person name="Fenton-May A.E."/>
            <person name="Moncayo G.E."/>
            <person name="Mistry A.R."/>
            <person name="Davis S.J."/>
            <person name="Gilbert R.J."/>
            <person name="Chakera A."/>
            <person name="O'Callaghan C.A."/>
        </authorList>
    </citation>
    <scope>SUBUNIT</scope>
</reference>
<reference key="11">
    <citation type="journal article" date="2010" name="Blood">
        <title>CLEC-2 activates Syk through dimerization.</title>
        <authorList>
            <person name="Hughes C.E."/>
            <person name="Pollitt A.Y."/>
            <person name="Mori J."/>
            <person name="Eble J.A."/>
            <person name="Tomlinson M.G."/>
            <person name="Hartwig J.H."/>
            <person name="O'Callaghan C.A."/>
            <person name="Fuetterer K."/>
            <person name="Watson S.P."/>
        </authorList>
    </citation>
    <scope>INTERACTION WITH SYK</scope>
    <scope>PHOSPHORYLATION AT TYR-7</scope>
</reference>
<reference key="12">
    <citation type="journal article" date="2007" name="J. Biol. Chem.">
        <title>The crystal structure and mutational binding analysis of the extracellular domain of the platelet-activating receptor CLEC-2.</title>
        <authorList>
            <person name="Watson A.A."/>
            <person name="Brown J."/>
            <person name="Harlos K."/>
            <person name="Eble J.A."/>
            <person name="Walter T.S."/>
            <person name="O'Callaghan C.A."/>
        </authorList>
    </citation>
    <scope>X-RAY CRYSTALLOGRAPHY (1.6 ANGSTROMS) OF 100-221</scope>
    <scope>SUBUNIT</scope>
    <scope>DISULFIDE BONDS</scope>
    <scope>INTERACTION WITH RHODOCYTIN</scope>
    <scope>MUTAGENESIS OF LYS-150; LYS-171; GLU-184; GLU-187; ASP-188; LYS-190 AND ASN-192</scope>
</reference>
<dbReference type="EMBL" id="AF124841">
    <property type="protein sequence ID" value="AAF36777.1"/>
    <property type="molecule type" value="mRNA"/>
</dbReference>
<dbReference type="EMBL" id="AY358599">
    <property type="protein sequence ID" value="AAQ88962.1"/>
    <property type="molecule type" value="mRNA"/>
</dbReference>
<dbReference type="EMBL" id="AC091814">
    <property type="status" value="NOT_ANNOTATED_CDS"/>
    <property type="molecule type" value="Genomic_DNA"/>
</dbReference>
<dbReference type="EMBL" id="BC029554">
    <property type="protein sequence ID" value="AAH29554.1"/>
    <property type="molecule type" value="mRNA"/>
</dbReference>
<dbReference type="CCDS" id="CCDS41751.1">
    <molecule id="Q9P126-2"/>
</dbReference>
<dbReference type="CCDS" id="CCDS41752.1">
    <molecule id="Q9P126-1"/>
</dbReference>
<dbReference type="RefSeq" id="NP_001092901.1">
    <molecule id="Q9P126-2"/>
    <property type="nucleotide sequence ID" value="NM_001099431.2"/>
</dbReference>
<dbReference type="RefSeq" id="NP_001380271.1">
    <molecule id="Q9P126-1"/>
    <property type="nucleotide sequence ID" value="NM_001393342.1"/>
</dbReference>
<dbReference type="RefSeq" id="NP_057593.3">
    <molecule id="Q9P126-1"/>
    <property type="nucleotide sequence ID" value="NM_016509.4"/>
</dbReference>
<dbReference type="RefSeq" id="XP_005253439.1">
    <property type="nucleotide sequence ID" value="XM_005253382.4"/>
</dbReference>
<dbReference type="RefSeq" id="XP_011518987.1">
    <molecule id="Q9P126-2"/>
    <property type="nucleotide sequence ID" value="XM_011520685.3"/>
</dbReference>
<dbReference type="RefSeq" id="XP_016874884.1">
    <property type="nucleotide sequence ID" value="XM_017019395.1"/>
</dbReference>
<dbReference type="RefSeq" id="XP_047284894.1">
    <molecule id="Q9P126-1"/>
    <property type="nucleotide sequence ID" value="XM_047428938.1"/>
</dbReference>
<dbReference type="PDB" id="2C6U">
    <property type="method" value="X-ray"/>
    <property type="resolution" value="1.60 A"/>
    <property type="chains" value="A=100-221"/>
</dbReference>
<dbReference type="PDB" id="3WSR">
    <property type="method" value="X-ray"/>
    <property type="resolution" value="1.91 A"/>
    <property type="chains" value="A/B=96-221"/>
</dbReference>
<dbReference type="PDB" id="3WWK">
    <property type="method" value="X-ray"/>
    <property type="resolution" value="2.98 A"/>
    <property type="chains" value="C/F/I/L=96-221"/>
</dbReference>
<dbReference type="PDBsum" id="2C6U"/>
<dbReference type="PDBsum" id="3WSR"/>
<dbReference type="PDBsum" id="3WWK"/>
<dbReference type="SMR" id="Q9P126"/>
<dbReference type="BioGRID" id="119420">
    <property type="interactions" value="6"/>
</dbReference>
<dbReference type="DIP" id="DIP-61332N"/>
<dbReference type="FunCoup" id="Q9P126">
    <property type="interactions" value="233"/>
</dbReference>
<dbReference type="IntAct" id="Q9P126">
    <property type="interactions" value="4"/>
</dbReference>
<dbReference type="STRING" id="9606.ENSP00000298527"/>
<dbReference type="GlyCosmos" id="Q9P126">
    <property type="glycosylation" value="3 sites, No reported glycans"/>
</dbReference>
<dbReference type="GlyGen" id="Q9P126">
    <property type="glycosylation" value="3 sites, 1 N-linked glycan (1 site)"/>
</dbReference>
<dbReference type="iPTMnet" id="Q9P126"/>
<dbReference type="PhosphoSitePlus" id="Q9P126"/>
<dbReference type="BioMuta" id="CLEC1B"/>
<dbReference type="DMDM" id="134035066"/>
<dbReference type="MassIVE" id="Q9P126"/>
<dbReference type="PaxDb" id="9606-ENSP00000298527"/>
<dbReference type="PeptideAtlas" id="Q9P126"/>
<dbReference type="ProteomicsDB" id="83635">
    <molecule id="Q9P126-1"/>
</dbReference>
<dbReference type="ProteomicsDB" id="83636">
    <molecule id="Q9P126-2"/>
</dbReference>
<dbReference type="Antibodypedia" id="23211">
    <property type="antibodies" value="355 antibodies from 33 providers"/>
</dbReference>
<dbReference type="DNASU" id="51266"/>
<dbReference type="Ensembl" id="ENST00000298527.11">
    <molecule id="Q9P126-1"/>
    <property type="protein sequence ID" value="ENSP00000298527.6"/>
    <property type="gene ID" value="ENSG00000165682.15"/>
</dbReference>
<dbReference type="Ensembl" id="ENST00000348658.4">
    <molecule id="Q9P126-2"/>
    <property type="protein sequence ID" value="ENSP00000327169.6"/>
    <property type="gene ID" value="ENSG00000165682.15"/>
</dbReference>
<dbReference type="Ensembl" id="ENST00000428126.6">
    <molecule id="Q9P126-2"/>
    <property type="protein sequence ID" value="ENSP00000406338.2"/>
    <property type="gene ID" value="ENSG00000165682.15"/>
</dbReference>
<dbReference type="GeneID" id="51266"/>
<dbReference type="KEGG" id="hsa:51266"/>
<dbReference type="MANE-Select" id="ENST00000298527.11">
    <property type="protein sequence ID" value="ENSP00000298527.6"/>
    <property type="RefSeq nucleotide sequence ID" value="NM_016509.4"/>
    <property type="RefSeq protein sequence ID" value="NP_057593.3"/>
</dbReference>
<dbReference type="UCSC" id="uc001qwu.5">
    <molecule id="Q9P126-1"/>
    <property type="organism name" value="human"/>
</dbReference>
<dbReference type="AGR" id="HGNC:24356"/>
<dbReference type="CTD" id="51266"/>
<dbReference type="DisGeNET" id="51266"/>
<dbReference type="GeneCards" id="CLEC1B"/>
<dbReference type="HGNC" id="HGNC:24356">
    <property type="gene designation" value="CLEC1B"/>
</dbReference>
<dbReference type="HPA" id="ENSG00000165682">
    <property type="expression patterns" value="Tissue enriched (liver)"/>
</dbReference>
<dbReference type="MIM" id="606783">
    <property type="type" value="gene"/>
</dbReference>
<dbReference type="neXtProt" id="NX_Q9P126"/>
<dbReference type="OpenTargets" id="ENSG00000165682"/>
<dbReference type="PharmGKB" id="PA142672098"/>
<dbReference type="VEuPathDB" id="HostDB:ENSG00000165682"/>
<dbReference type="eggNOG" id="KOG4297">
    <property type="taxonomic scope" value="Eukaryota"/>
</dbReference>
<dbReference type="GeneTree" id="ENSGT00940000162140"/>
<dbReference type="HOGENOM" id="CLU_049894_9_0_1"/>
<dbReference type="InParanoid" id="Q9P126"/>
<dbReference type="OMA" id="CKNKHYL"/>
<dbReference type="OrthoDB" id="6133475at2759"/>
<dbReference type="PAN-GO" id="Q9P126">
    <property type="GO annotations" value="4 GO annotations based on evolutionary models"/>
</dbReference>
<dbReference type="PhylomeDB" id="Q9P126"/>
<dbReference type="TreeFam" id="TF336674"/>
<dbReference type="PathwayCommons" id="Q9P126"/>
<dbReference type="Reactome" id="R-HSA-114604">
    <property type="pathway name" value="GPVI-mediated activation cascade"/>
</dbReference>
<dbReference type="Reactome" id="R-HSA-9707616">
    <property type="pathway name" value="Heme signaling"/>
</dbReference>
<dbReference type="SignaLink" id="Q9P126"/>
<dbReference type="SIGNOR" id="Q9P126"/>
<dbReference type="BioGRID-ORCS" id="51266">
    <property type="hits" value="10 hits in 1140 CRISPR screens"/>
</dbReference>
<dbReference type="ChiTaRS" id="CLEC1B">
    <property type="organism name" value="human"/>
</dbReference>
<dbReference type="EvolutionaryTrace" id="Q9P126"/>
<dbReference type="GeneWiki" id="CLEC1B"/>
<dbReference type="GenomeRNAi" id="51266"/>
<dbReference type="Pharos" id="Q9P126">
    <property type="development level" value="Tbio"/>
</dbReference>
<dbReference type="PRO" id="PR:Q9P126"/>
<dbReference type="Proteomes" id="UP000005640">
    <property type="component" value="Chromosome 12"/>
</dbReference>
<dbReference type="RNAct" id="Q9P126">
    <property type="molecule type" value="protein"/>
</dbReference>
<dbReference type="Bgee" id="ENSG00000165682">
    <property type="expression patterns" value="Expressed in monocyte and 91 other cell types or tissues"/>
</dbReference>
<dbReference type="ExpressionAtlas" id="Q9P126">
    <property type="expression patterns" value="baseline and differential"/>
</dbReference>
<dbReference type="GO" id="GO:0009986">
    <property type="term" value="C:cell surface"/>
    <property type="evidence" value="ECO:0007669"/>
    <property type="project" value="Ensembl"/>
</dbReference>
<dbReference type="GO" id="GO:0005886">
    <property type="term" value="C:plasma membrane"/>
    <property type="evidence" value="ECO:0000318"/>
    <property type="project" value="GO_Central"/>
</dbReference>
<dbReference type="GO" id="GO:0030246">
    <property type="term" value="F:carbohydrate binding"/>
    <property type="evidence" value="ECO:0007669"/>
    <property type="project" value="UniProtKB-KW"/>
</dbReference>
<dbReference type="GO" id="GO:0004888">
    <property type="term" value="F:transmembrane signaling receptor activity"/>
    <property type="evidence" value="ECO:0000314"/>
    <property type="project" value="UniProtKB"/>
</dbReference>
<dbReference type="GO" id="GO:0007166">
    <property type="term" value="P:cell surface receptor signaling pathway"/>
    <property type="evidence" value="ECO:0000304"/>
    <property type="project" value="ProtInc"/>
</dbReference>
<dbReference type="GO" id="GO:0006952">
    <property type="term" value="P:defense response"/>
    <property type="evidence" value="ECO:0000304"/>
    <property type="project" value="ProtInc"/>
</dbReference>
<dbReference type="GO" id="GO:0030220">
    <property type="term" value="P:platelet formation"/>
    <property type="evidence" value="ECO:0000318"/>
    <property type="project" value="GO_Central"/>
</dbReference>
<dbReference type="GO" id="GO:0007165">
    <property type="term" value="P:signal transduction"/>
    <property type="evidence" value="ECO:0000314"/>
    <property type="project" value="UniProtKB"/>
</dbReference>
<dbReference type="CDD" id="cd03593">
    <property type="entry name" value="CLECT_NK_receptors_like"/>
    <property type="match status" value="1"/>
</dbReference>
<dbReference type="FunFam" id="3.10.100.10:FF:000083">
    <property type="entry name" value="C-type lectin domain family 1 member B"/>
    <property type="match status" value="1"/>
</dbReference>
<dbReference type="Gene3D" id="3.10.100.10">
    <property type="entry name" value="Mannose-Binding Protein A, subunit A"/>
    <property type="match status" value="1"/>
</dbReference>
<dbReference type="InterPro" id="IPR001304">
    <property type="entry name" value="C-type_lectin-like"/>
</dbReference>
<dbReference type="InterPro" id="IPR016186">
    <property type="entry name" value="C-type_lectin-like/link_sf"/>
</dbReference>
<dbReference type="InterPro" id="IPR052309">
    <property type="entry name" value="C-type_Lectin_Domain_Fam1"/>
</dbReference>
<dbReference type="InterPro" id="IPR016187">
    <property type="entry name" value="CTDL_fold"/>
</dbReference>
<dbReference type="InterPro" id="IPR033992">
    <property type="entry name" value="NKR-like_CTLD"/>
</dbReference>
<dbReference type="PANTHER" id="PTHR46490:SF2">
    <property type="entry name" value="C-TYPE LECTIN DOMAIN FAMILY 1 MEMBER B"/>
    <property type="match status" value="1"/>
</dbReference>
<dbReference type="PANTHER" id="PTHR46490">
    <property type="entry name" value="C-TYPE LECTIN DOMAIN FAMILY 12 MEMBER A-RELATED"/>
    <property type="match status" value="1"/>
</dbReference>
<dbReference type="Pfam" id="PF00059">
    <property type="entry name" value="Lectin_C"/>
    <property type="match status" value="1"/>
</dbReference>
<dbReference type="SMART" id="SM00034">
    <property type="entry name" value="CLECT"/>
    <property type="match status" value="1"/>
</dbReference>
<dbReference type="SUPFAM" id="SSF56436">
    <property type="entry name" value="C-type lectin-like"/>
    <property type="match status" value="1"/>
</dbReference>
<dbReference type="PROSITE" id="PS50041">
    <property type="entry name" value="C_TYPE_LECTIN_2"/>
    <property type="match status" value="1"/>
</dbReference>
<proteinExistence type="evidence at protein level"/>
<evidence type="ECO:0000255" key="1"/>
<evidence type="ECO:0000255" key="2">
    <source>
        <dbReference type="PROSITE-ProRule" id="PRU00040"/>
    </source>
</evidence>
<evidence type="ECO:0000269" key="3">
    <source>
    </source>
</evidence>
<evidence type="ECO:0000269" key="4">
    <source>
    </source>
</evidence>
<evidence type="ECO:0000269" key="5">
    <source>
    </source>
</evidence>
<evidence type="ECO:0000269" key="6">
    <source>
    </source>
</evidence>
<evidence type="ECO:0000269" key="7">
    <source>
    </source>
</evidence>
<evidence type="ECO:0000269" key="8">
    <source>
    </source>
</evidence>
<evidence type="ECO:0000269" key="9">
    <source>
    </source>
</evidence>
<evidence type="ECO:0000269" key="10">
    <source>
    </source>
</evidence>
<evidence type="ECO:0000269" key="11">
    <source>
    </source>
</evidence>
<evidence type="ECO:0000269" key="12">
    <source>
    </source>
</evidence>
<evidence type="ECO:0000269" key="13">
    <source>
    </source>
</evidence>
<evidence type="ECO:0000303" key="14">
    <source>
    </source>
</evidence>
<evidence type="ECO:0000305" key="15"/>
<evidence type="ECO:0000305" key="16">
    <source>
    </source>
</evidence>
<evidence type="ECO:0000305" key="17">
    <source>
    </source>
</evidence>
<evidence type="ECO:0000305" key="18">
    <source>
    </source>
</evidence>
<evidence type="ECO:0007829" key="19">
    <source>
        <dbReference type="PDB" id="2C6U"/>
    </source>
</evidence>
<name>CLC1B_HUMAN</name>
<protein>
    <recommendedName>
        <fullName>C-type lectin domain family 1 member B</fullName>
    </recommendedName>
    <alternativeName>
        <fullName>C-type lectin-like receptor 2</fullName>
        <shortName>CLEC-2</shortName>
    </alternativeName>
</protein>
<feature type="chain" id="PRO_0000280043" description="C-type lectin domain family 1 member B">
    <location>
        <begin position="1"/>
        <end position="229"/>
    </location>
</feature>
<feature type="topological domain" description="Cytoplasmic" evidence="1">
    <location>
        <begin position="1"/>
        <end position="33"/>
    </location>
</feature>
<feature type="transmembrane region" description="Helical; Signal-anchor for type II membrane protein" evidence="1">
    <location>
        <begin position="34"/>
        <end position="54"/>
    </location>
</feature>
<feature type="topological domain" description="Extracellular" evidence="1">
    <location>
        <begin position="55"/>
        <end position="229"/>
    </location>
</feature>
<feature type="domain" description="C-type lectin" evidence="2">
    <location>
        <begin position="109"/>
        <end position="217"/>
    </location>
</feature>
<feature type="short sequence motif" description="ITAM" evidence="18">
    <location>
        <begin position="7"/>
        <end position="10"/>
    </location>
</feature>
<feature type="modified residue" description="Phosphotyrosine" evidence="13">
    <location>
        <position position="7"/>
    </location>
</feature>
<feature type="glycosylation site" description="N-linked (GlcNAc...) asparagine" evidence="1">
    <location>
        <position position="68"/>
    </location>
</feature>
<feature type="glycosylation site" description="N-linked (GlcNAc...) asparagine" evidence="1">
    <location>
        <position position="120"/>
    </location>
</feature>
<feature type="glycosylation site" description="N-linked (GlcNAc...) asparagine" evidence="1">
    <location>
        <position position="134"/>
    </location>
</feature>
<feature type="disulfide bond" evidence="2 8">
    <location>
        <begin position="102"/>
        <end position="113"/>
    </location>
</feature>
<feature type="disulfide bond" evidence="2 8">
    <location>
        <begin position="130"/>
        <end position="216"/>
    </location>
</feature>
<feature type="disulfide bond" evidence="2 8">
    <location>
        <begin position="195"/>
        <end position="208"/>
    </location>
</feature>
<feature type="splice variant" id="VSP_023515" description="In isoform 2." evidence="14">
    <original>VGSASSSWWRVMALILLILCVGMVVGLVALGIWS</original>
    <variation>A</variation>
    <location>
        <begin position="22"/>
        <end position="55"/>
    </location>
</feature>
<feature type="sequence variant" id="VAR_031047" description="In dbSNP:rs612593." evidence="3 4 5 7">
    <original>I</original>
    <variation>V</variation>
    <location>
        <position position="20"/>
    </location>
</feature>
<feature type="sequence variant" id="VAR_031048" description="In dbSNP:rs2273986." evidence="4">
    <original>S</original>
    <variation>P</variation>
    <location>
        <position position="24"/>
    </location>
</feature>
<feature type="sequence variant" id="VAR_031049" description="In dbSNP:rs2273987.">
    <original>S</original>
    <variation>F</variation>
    <location>
        <position position="28"/>
    </location>
</feature>
<feature type="sequence variant" id="VAR_031050" description="In dbSNP:rs583903." evidence="3 4 5 7">
    <original>G</original>
    <variation>D</variation>
    <location>
        <position position="64"/>
    </location>
</feature>
<feature type="mutagenesis site" description="Loss of activation upon podoplanin or rhodocytin stimulation." evidence="10">
    <original>Y</original>
    <variation>F</variation>
    <location>
        <position position="7"/>
    </location>
</feature>
<feature type="mutagenesis site" description="Substantial reduction in rhodocytin binding." evidence="8">
    <original>K</original>
    <variation>A</variation>
    <location>
        <position position="150"/>
    </location>
</feature>
<feature type="mutagenesis site" description="Significant reduction in rhodocytin binding." evidence="8">
    <original>K</original>
    <variation>A</variation>
    <location>
        <position position="171"/>
    </location>
</feature>
<feature type="mutagenesis site" description="Significant reduction in rhodocytin binding." evidence="8">
    <original>E</original>
    <variation>A</variation>
    <location>
        <position position="184"/>
    </location>
</feature>
<feature type="mutagenesis site" description="Significant reduction in rhodocytin binding." evidence="8">
    <original>E</original>
    <variation>A</variation>
    <location>
        <position position="187"/>
    </location>
</feature>
<feature type="mutagenesis site" description="Significant reduction in rhodocytin binding." evidence="8">
    <original>D</original>
    <variation>A</variation>
    <location>
        <position position="188"/>
    </location>
</feature>
<feature type="mutagenesis site" description="Significant reduction in rhodocytin binding." evidence="8">
    <original>K</original>
    <variation>A</variation>
    <location>
        <position position="190"/>
    </location>
</feature>
<feature type="mutagenesis site" description="Significant reduction in rhodocytin binding." evidence="8">
    <original>N</original>
    <variation>A</variation>
    <location>
        <position position="192"/>
    </location>
</feature>
<feature type="sequence conflict" description="In Ref. 1; AAF36777 and 2." evidence="15" ref="1 2">
    <original>C</original>
    <variation>Y</variation>
    <location>
        <position position="41"/>
    </location>
</feature>
<feature type="strand" evidence="19">
    <location>
        <begin position="106"/>
        <end position="109"/>
    </location>
</feature>
<feature type="strand" evidence="19">
    <location>
        <begin position="112"/>
        <end position="121"/>
    </location>
</feature>
<feature type="helix" evidence="19">
    <location>
        <begin position="123"/>
        <end position="132"/>
    </location>
</feature>
<feature type="helix" evidence="19">
    <location>
        <begin position="143"/>
        <end position="150"/>
    </location>
</feature>
<feature type="strand" evidence="19">
    <location>
        <begin position="157"/>
        <end position="162"/>
    </location>
</feature>
<feature type="helix" evidence="19">
    <location>
        <begin position="180"/>
        <end position="185"/>
    </location>
</feature>
<feature type="strand" evidence="19">
    <location>
        <begin position="195"/>
        <end position="199"/>
    </location>
</feature>
<feature type="strand" evidence="19">
    <location>
        <begin position="202"/>
        <end position="206"/>
    </location>
</feature>
<feature type="strand" evidence="19">
    <location>
        <begin position="212"/>
        <end position="219"/>
    </location>
</feature>
<sequence>MQDEDGYITLNIKTRKPALISVGSASSSWWRVMALILLILCVGMVVGLVALGIWSVMQRNYLQGENENRTGTLQQLAKRFCQYVVKQSELKGTFKGHKCSPCDTNWRYYGDSCYGFFRHNLTWEESKQYCTDMNATLLKIDNRNIVEYIKARTHLIRWVGLSRQKSNEVWKWEDGSVISENMFEFLEDGKGNMNCAYFHNGKMHPTFCENKHYLMCERKAGMTKVDQLP</sequence>
<comment type="function">
    <text evidence="9 10">C-type lectin-like receptor that functions as a platelet receptor for the lymphatic endothelial marker, PDPN (PubMed:18215137). After ligand activation, signals via sequential activation of SRC and SYK tyrosine kinases leading to activation of PLCG2 (PubMed:18955485).</text>
</comment>
<comment type="function">
    <text evidence="10 16">(Microbial infection) Acts as a receptor for the platelet-aggregating snake venom protein rhodocytin. Rhodocytin binding leads to tyrosine phosphorylation and this promotes the binding of spleen tyrosine kinase (SYK) and initiation of downstream tyrosine phosphorylation events and activation of PLCG2 (PubMed:16174766, PubMed:18955485).</text>
</comment>
<comment type="function">
    <text evidence="17">(Microbial infection) Acts as an attachment factor for Human immunodeficiency virus type 1 (HIV-1) and facilitates its capture by platelets (PubMed:16940507).</text>
</comment>
<comment type="subunit">
    <text evidence="8 9 11 12 13">Homodimer. Interacts (via cytoplasmic domain) with RACK1; promotes CLEC1B ubiquitination and proteasome-mediated degradation. Interacts (dimer) with SYK (via SH2 domains). Interacts with PDPN; the interaction is independent of CLEC1B glycosylation and activates CLEC1B (PubMed:18215137).</text>
</comment>
<comment type="interaction">
    <interactant intactId="EBI-16130833">
        <id>Q9P126-1</id>
    </interactant>
    <interactant intactId="EBI-723160">
        <id>Q86YL7</id>
        <label>PDPN</label>
    </interactant>
    <organismsDiffer>false</organismsDiffer>
    <experiments>2</experiments>
</comment>
<comment type="subcellular location">
    <subcellularLocation>
        <location evidence="15">Membrane</location>
        <topology evidence="15">Single-pass type II membrane protein</topology>
    </subcellularLocation>
</comment>
<comment type="alternative products">
    <event type="alternative splicing"/>
    <isoform>
        <id>Q9P126-1</id>
        <name>1</name>
        <sequence type="displayed"/>
    </isoform>
    <isoform>
        <id>Q9P126-2</id>
        <name>2</name>
        <sequence type="described" ref="VSP_023515"/>
    </isoform>
</comment>
<comment type="tissue specificity">
    <text evidence="3 6 7">Expressed preferentially in the liver. Also expressed in immune cells of myeloid origin and on the surface of platelets.</text>
</comment>
<comment type="PTM">
    <text evidence="6 9">Glycosylated.</text>
</comment>
<comment type="PTM">
    <text evidence="6 13">Phosphorylated on tyrosine residue in response to rhodocytin binding.</text>
</comment>
<comment type="online information" name="Functional Glycomics Gateway - Glycan Binding">
    <link uri="http://www.functionalglycomics.org/glycomics/GBPServlet?&amp;operationType=view&amp;cbpId=cbp_hum_Ctlect_240"/>
    <text>CLEC-2</text>
</comment>